<sequence>MPHFPNLPLPEAAAAAAHAALLALALLLLLLRSARALASRCASCLKTAPRRAAAVDGGLAAASSVGAWYRAALACCGYALLAQVAALSYEVAVAGSHVAVEALLLPAVQALAWAALLALAMQARAVGWGRFPVLVRVWWVVSFVLCVGIAYDDTRHLMGDDDDDEVDYAHMVANFASAPALGFLCLVGVMGSTGVELEFTDDDSSVHEPLLLGGQRRDADEEPGCLRVTPYGDAGIVSLATLSWLSPLLSVGAQRPLELADIPLMAHKDRAKSCYKAMSSHYERQRMERPGSEPSLAWAILKSFWREAAINGAFAAVNTIVSYVGPYLISYFVDYLSGKIEFPHEGYILASVFFVAKLLETLTARQWYLGVDVMGIHVKSGLTAMVYRKGLRLSNSSRQSHTSGEIVNYMAVDVQRVGDYAWYFHDIWMLPLQIILALAILYKNVGIAMVSTLVATVLSIAASVPVAKLQEHYQDKLMASKDERMRKTSECLKNMRILKLQAWEDRYRLKLEEMRNVECKWLRWALYSQAAVTFVFWSSPIFVAVITFGTCILLGGELTAGGVLSALATFRILQEPLRNFPDLISMIAQTRVSLDRLSHFLQQEELPDDATITVPHGSTDKAININDATFSWNPSSPTPTLSGINLSVVRGMRVAVCGVIGSGKSSLLSSILGEIPKLCGQVRISGSAAYVPQTAWIQSGNIEENILFGSPMDKQRYKRVIEACSLKKDLQLLQYGDQTIIGDRGINLSGGQKQRVQLARALYQDADIYLLDDPFSAVDAHTGSELFREYILTALASKTVIYVTHQIEFLPAADLILVLKDGHITQAGKYDDLLQAGTDFNALVCAHKEAIETMEFSEDSDEDTVSSVPIKRLTPSVSNIDNLKNKVSNNEKPSSTRGIKEKKKKPEERKKKRSVQEEERERGRVSLQVYLSYMGEAYKGTLIPLIILAQTMFQVLQIASNWWMAWANPQTEGDAPKTDSVVLLVVYMSLAFGSSLFVFVRSLLVATFGLATAQKLFVKMLRCVFRAPMSFFDTTPSGRILNRVSVDQSVVDLDIAFRLGGFASTTIQLLGIVAVMSKVTWQVLILIVPMAVACMWMQRYYIASSRELTRILSVQKSPVIHLFSESIAGAATIRGFGQEKRFMKRNLYLLDCFARPLFSSLAAIEWLCLRMELLSTFVFAFCMAILVSFPPGTIEPSMAGLAVTYGLNLNARMSRWILSFCKLENRIISVERIYQYCKLPSEAPLIIENSRPSSSWPENGNIELVDLKVRYKDDLPLVLHGISCIFPGGKKIGIVGRTGSGKSTLIQALFRLIEPTGGKVIIDDVDISRIGLHDLRSRLSIIPQDPTLFEGTIRMNLDPLEECTDQEIWEALEKCQLGEVIRSKDEKLDSPVLENGDNWSVGQRQLIALGRALLKQAKILVLDEATASVDTATDNLIQKIIRSEFKDCTVCTIAHRIPTVIDSDLVLVLSDGKIAEFDTPQRLLEDKSSMFMQLVSEYSTRSSCI</sequence>
<dbReference type="EC" id="7.-.-.-" evidence="6"/>
<dbReference type="EMBL" id="CM000128">
    <property type="protein sequence ID" value="EAY88494.1"/>
    <property type="molecule type" value="Genomic_DNA"/>
</dbReference>
<dbReference type="SMR" id="A2XCD4"/>
<dbReference type="STRING" id="39946.A2XCD4"/>
<dbReference type="iPTMnet" id="A2XCD4"/>
<dbReference type="EnsemblPlants" id="BGIOSGA011835-TA">
    <property type="protein sequence ID" value="BGIOSGA011835-PA"/>
    <property type="gene ID" value="BGIOSGA011835"/>
</dbReference>
<dbReference type="EnsemblPlants" id="OsGoSa_03g0003250.01">
    <property type="protein sequence ID" value="OsGoSa_03g0003250.01"/>
    <property type="gene ID" value="OsGoSa_03g0003250"/>
</dbReference>
<dbReference type="EnsemblPlants" id="OsLiXu_Ung0011100.01">
    <property type="protein sequence ID" value="OsLiXu_Ung0011100.01"/>
    <property type="gene ID" value="OsLiXu_Ung0011100"/>
</dbReference>
<dbReference type="Gramene" id="BGIOSGA011835-TA">
    <property type="protein sequence ID" value="BGIOSGA011835-PA"/>
    <property type="gene ID" value="BGIOSGA011835"/>
</dbReference>
<dbReference type="Gramene" id="OsGoSa_03g0003250.01">
    <property type="protein sequence ID" value="OsGoSa_03g0003250.01"/>
    <property type="gene ID" value="OsGoSa_03g0003250"/>
</dbReference>
<dbReference type="Gramene" id="OsLiXu_Ung0011100.01">
    <property type="protein sequence ID" value="OsLiXu_Ung0011100.01"/>
    <property type="gene ID" value="OsLiXu_Ung0011100"/>
</dbReference>
<dbReference type="HOGENOM" id="CLU_000604_27_3_1"/>
<dbReference type="OMA" id="QVTDAWT"/>
<dbReference type="OrthoDB" id="6500128at2759"/>
<dbReference type="Proteomes" id="UP000007015">
    <property type="component" value="Chromosome 3"/>
</dbReference>
<dbReference type="GO" id="GO:0016020">
    <property type="term" value="C:membrane"/>
    <property type="evidence" value="ECO:0007669"/>
    <property type="project" value="UniProtKB-SubCell"/>
</dbReference>
<dbReference type="GO" id="GO:0140359">
    <property type="term" value="F:ABC-type transporter activity"/>
    <property type="evidence" value="ECO:0007669"/>
    <property type="project" value="InterPro"/>
</dbReference>
<dbReference type="GO" id="GO:0005524">
    <property type="term" value="F:ATP binding"/>
    <property type="evidence" value="ECO:0007669"/>
    <property type="project" value="UniProtKB-KW"/>
</dbReference>
<dbReference type="GO" id="GO:0016887">
    <property type="term" value="F:ATP hydrolysis activity"/>
    <property type="evidence" value="ECO:0007669"/>
    <property type="project" value="InterPro"/>
</dbReference>
<dbReference type="CDD" id="cd18579">
    <property type="entry name" value="ABC_6TM_ABCC_D1"/>
    <property type="match status" value="1"/>
</dbReference>
<dbReference type="CDD" id="cd18580">
    <property type="entry name" value="ABC_6TM_ABCC_D2"/>
    <property type="match status" value="1"/>
</dbReference>
<dbReference type="CDD" id="cd03250">
    <property type="entry name" value="ABCC_MRP_domain1"/>
    <property type="match status" value="1"/>
</dbReference>
<dbReference type="CDD" id="cd03244">
    <property type="entry name" value="ABCC_MRP_domain2"/>
    <property type="match status" value="1"/>
</dbReference>
<dbReference type="FunFam" id="1.20.1560.10:FF:000003">
    <property type="entry name" value="ABC transporter C family member 10"/>
    <property type="match status" value="1"/>
</dbReference>
<dbReference type="FunFam" id="3.40.50.300:FF:000169">
    <property type="entry name" value="ABC transporter C family member 3"/>
    <property type="match status" value="1"/>
</dbReference>
<dbReference type="FunFam" id="1.20.1560.10:FF:000002">
    <property type="entry name" value="ABC transporter C family member 5"/>
    <property type="match status" value="1"/>
</dbReference>
<dbReference type="FunFam" id="3.40.50.300:FF:000508">
    <property type="entry name" value="ABC transporter C family member 5"/>
    <property type="match status" value="1"/>
</dbReference>
<dbReference type="Gene3D" id="1.20.1560.10">
    <property type="entry name" value="ABC transporter type 1, transmembrane domain"/>
    <property type="match status" value="2"/>
</dbReference>
<dbReference type="Gene3D" id="3.40.50.300">
    <property type="entry name" value="P-loop containing nucleotide triphosphate hydrolases"/>
    <property type="match status" value="2"/>
</dbReference>
<dbReference type="InterPro" id="IPR003593">
    <property type="entry name" value="AAA+_ATPase"/>
</dbReference>
<dbReference type="InterPro" id="IPR011527">
    <property type="entry name" value="ABC1_TM_dom"/>
</dbReference>
<dbReference type="InterPro" id="IPR036640">
    <property type="entry name" value="ABC1_TM_sf"/>
</dbReference>
<dbReference type="InterPro" id="IPR003439">
    <property type="entry name" value="ABC_transporter-like_ATP-bd"/>
</dbReference>
<dbReference type="InterPro" id="IPR017871">
    <property type="entry name" value="ABC_transporter-like_CS"/>
</dbReference>
<dbReference type="InterPro" id="IPR050173">
    <property type="entry name" value="ABC_transporter_C-like"/>
</dbReference>
<dbReference type="InterPro" id="IPR044746">
    <property type="entry name" value="ABCC_6TM_D1"/>
</dbReference>
<dbReference type="InterPro" id="IPR044726">
    <property type="entry name" value="ABCC_6TM_D2"/>
</dbReference>
<dbReference type="InterPro" id="IPR027417">
    <property type="entry name" value="P-loop_NTPase"/>
</dbReference>
<dbReference type="PANTHER" id="PTHR24223:SF189">
    <property type="entry name" value="ABC TRANSPORTER C FAMILY MEMBER 5"/>
    <property type="match status" value="1"/>
</dbReference>
<dbReference type="PANTHER" id="PTHR24223">
    <property type="entry name" value="ATP-BINDING CASSETTE SUB-FAMILY C"/>
    <property type="match status" value="1"/>
</dbReference>
<dbReference type="Pfam" id="PF00664">
    <property type="entry name" value="ABC_membrane"/>
    <property type="match status" value="2"/>
</dbReference>
<dbReference type="Pfam" id="PF00005">
    <property type="entry name" value="ABC_tran"/>
    <property type="match status" value="2"/>
</dbReference>
<dbReference type="SMART" id="SM00382">
    <property type="entry name" value="AAA"/>
    <property type="match status" value="2"/>
</dbReference>
<dbReference type="SUPFAM" id="SSF90123">
    <property type="entry name" value="ABC transporter transmembrane region"/>
    <property type="match status" value="2"/>
</dbReference>
<dbReference type="SUPFAM" id="SSF52540">
    <property type="entry name" value="P-loop containing nucleoside triphosphate hydrolases"/>
    <property type="match status" value="2"/>
</dbReference>
<dbReference type="PROSITE" id="PS50929">
    <property type="entry name" value="ABC_TM1F"/>
    <property type="match status" value="2"/>
</dbReference>
<dbReference type="PROSITE" id="PS00211">
    <property type="entry name" value="ABC_TRANSPORTER_1"/>
    <property type="match status" value="1"/>
</dbReference>
<dbReference type="PROSITE" id="PS50893">
    <property type="entry name" value="ABC_TRANSPORTER_2"/>
    <property type="match status" value="2"/>
</dbReference>
<evidence type="ECO:0000250" key="1">
    <source>
        <dbReference type="UniProtKB" id="Q10RX7"/>
    </source>
</evidence>
<evidence type="ECO:0000255" key="2"/>
<evidence type="ECO:0000255" key="3">
    <source>
        <dbReference type="PROSITE-ProRule" id="PRU00434"/>
    </source>
</evidence>
<evidence type="ECO:0000255" key="4">
    <source>
        <dbReference type="PROSITE-ProRule" id="PRU00441"/>
    </source>
</evidence>
<evidence type="ECO:0000256" key="5">
    <source>
        <dbReference type="SAM" id="MobiDB-lite"/>
    </source>
</evidence>
<evidence type="ECO:0000305" key="6"/>
<evidence type="ECO:0000312" key="7">
    <source>
        <dbReference type="EMBL" id="EAY88494.1"/>
    </source>
</evidence>
<reference key="1">
    <citation type="journal article" date="2005" name="PLoS Biol.">
        <title>The genomes of Oryza sativa: a history of duplications.</title>
        <authorList>
            <person name="Yu J."/>
            <person name="Wang J."/>
            <person name="Lin W."/>
            <person name="Li S."/>
            <person name="Li H."/>
            <person name="Zhou J."/>
            <person name="Ni P."/>
            <person name="Dong W."/>
            <person name="Hu S."/>
            <person name="Zeng C."/>
            <person name="Zhang J."/>
            <person name="Zhang Y."/>
            <person name="Li R."/>
            <person name="Xu Z."/>
            <person name="Li S."/>
            <person name="Li X."/>
            <person name="Zheng H."/>
            <person name="Cong L."/>
            <person name="Lin L."/>
            <person name="Yin J."/>
            <person name="Geng J."/>
            <person name="Li G."/>
            <person name="Shi J."/>
            <person name="Liu J."/>
            <person name="Lv H."/>
            <person name="Li J."/>
            <person name="Wang J."/>
            <person name="Deng Y."/>
            <person name="Ran L."/>
            <person name="Shi X."/>
            <person name="Wang X."/>
            <person name="Wu Q."/>
            <person name="Li C."/>
            <person name="Ren X."/>
            <person name="Wang J."/>
            <person name="Wang X."/>
            <person name="Li D."/>
            <person name="Liu D."/>
            <person name="Zhang X."/>
            <person name="Ji Z."/>
            <person name="Zhao W."/>
            <person name="Sun Y."/>
            <person name="Zhang Z."/>
            <person name="Bao J."/>
            <person name="Han Y."/>
            <person name="Dong L."/>
            <person name="Ji J."/>
            <person name="Chen P."/>
            <person name="Wu S."/>
            <person name="Liu J."/>
            <person name="Xiao Y."/>
            <person name="Bu D."/>
            <person name="Tan J."/>
            <person name="Yang L."/>
            <person name="Ye C."/>
            <person name="Zhang J."/>
            <person name="Xu J."/>
            <person name="Zhou Y."/>
            <person name="Yu Y."/>
            <person name="Zhang B."/>
            <person name="Zhuang S."/>
            <person name="Wei H."/>
            <person name="Liu B."/>
            <person name="Lei M."/>
            <person name="Yu H."/>
            <person name="Li Y."/>
            <person name="Xu H."/>
            <person name="Wei S."/>
            <person name="He X."/>
            <person name="Fang L."/>
            <person name="Zhang Z."/>
            <person name="Zhang Y."/>
            <person name="Huang X."/>
            <person name="Su Z."/>
            <person name="Tong W."/>
            <person name="Li J."/>
            <person name="Tong Z."/>
            <person name="Li S."/>
            <person name="Ye J."/>
            <person name="Wang L."/>
            <person name="Fang L."/>
            <person name="Lei T."/>
            <person name="Chen C.-S."/>
            <person name="Chen H.-C."/>
            <person name="Xu Z."/>
            <person name="Li H."/>
            <person name="Huang H."/>
            <person name="Zhang F."/>
            <person name="Xu H."/>
            <person name="Li N."/>
            <person name="Zhao C."/>
            <person name="Li S."/>
            <person name="Dong L."/>
            <person name="Huang Y."/>
            <person name="Li L."/>
            <person name="Xi Y."/>
            <person name="Qi Q."/>
            <person name="Li W."/>
            <person name="Zhang B."/>
            <person name="Hu W."/>
            <person name="Zhang Y."/>
            <person name="Tian X."/>
            <person name="Jiao Y."/>
            <person name="Liang X."/>
            <person name="Jin J."/>
            <person name="Gao L."/>
            <person name="Zheng W."/>
            <person name="Hao B."/>
            <person name="Liu S.-M."/>
            <person name="Wang W."/>
            <person name="Yuan L."/>
            <person name="Cao M."/>
            <person name="McDermott J."/>
            <person name="Samudrala R."/>
            <person name="Wang J."/>
            <person name="Wong G.K.-S."/>
            <person name="Yang H."/>
        </authorList>
    </citation>
    <scope>NUCLEOTIDE SEQUENCE [LARGE SCALE GENOMIC DNA]</scope>
    <source>
        <strain>cv. 93-11</strain>
    </source>
</reference>
<proteinExistence type="inferred from homology"/>
<name>AB13C_ORYSI</name>
<protein>
    <recommendedName>
        <fullName evidence="6">ABC transporter C family member 13</fullName>
        <shortName evidence="6">OsABCC13</shortName>
        <ecNumber evidence="6">7.-.-.-</ecNumber>
    </recommendedName>
    <alternativeName>
        <fullName evidence="6">Multidrug resistance-associated protein 13</fullName>
        <shortName evidence="6">OsMRP13</shortName>
    </alternativeName>
    <alternativeName>
        <fullName evidence="6">OsMRP5</fullName>
    </alternativeName>
    <alternativeName>
        <fullName evidence="6">Protein LOW PHYTIC ACID 2</fullName>
    </alternativeName>
</protein>
<feature type="chain" id="PRO_0000431887" description="ABC transporter C family member 13">
    <location>
        <begin position="1"/>
        <end position="1505"/>
    </location>
</feature>
<feature type="transmembrane region" description="Helical; Name=1" evidence="2">
    <location>
        <begin position="11"/>
        <end position="31"/>
    </location>
</feature>
<feature type="transmembrane region" description="Helical; Name=2" evidence="2">
    <location>
        <begin position="54"/>
        <end position="68"/>
    </location>
</feature>
<feature type="transmembrane region" description="Helical; Name=3" evidence="2">
    <location>
        <begin position="71"/>
        <end position="91"/>
    </location>
</feature>
<feature type="transmembrane region" description="Helical; Name=4" evidence="2">
    <location>
        <begin position="102"/>
        <end position="122"/>
    </location>
</feature>
<feature type="transmembrane region" description="Helical; Name=5" evidence="2">
    <location>
        <begin position="131"/>
        <end position="151"/>
    </location>
</feature>
<feature type="transmembrane region" description="Helical; Name=6" evidence="2">
    <location>
        <begin position="171"/>
        <end position="191"/>
    </location>
</feature>
<feature type="transmembrane region" description="Helical; Name=7" evidence="2">
    <location>
        <begin position="313"/>
        <end position="333"/>
    </location>
</feature>
<feature type="transmembrane region" description="Helical; Name=8" evidence="2">
    <location>
        <begin position="336"/>
        <end position="356"/>
    </location>
</feature>
<feature type="transmembrane region" description="Helical; Name=9" evidence="2">
    <location>
        <begin position="367"/>
        <end position="387"/>
    </location>
</feature>
<feature type="transmembrane region" description="Helical; Name=10" evidence="2">
    <location>
        <begin position="421"/>
        <end position="441"/>
    </location>
</feature>
<feature type="transmembrane region" description="Helical; Name=11" evidence="2">
    <location>
        <begin position="447"/>
        <end position="467"/>
    </location>
</feature>
<feature type="transmembrane region" description="Helical; Name=12" evidence="2">
    <location>
        <begin position="534"/>
        <end position="554"/>
    </location>
</feature>
<feature type="transmembrane region" description="Helical; Name=13" evidence="2">
    <location>
        <begin position="940"/>
        <end position="960"/>
    </location>
</feature>
<feature type="transmembrane region" description="Helical; Name=14" evidence="2">
    <location>
        <begin position="980"/>
        <end position="1000"/>
    </location>
</feature>
<feature type="transmembrane region" description="Helical; Name=15" evidence="2">
    <location>
        <begin position="1055"/>
        <end position="1077"/>
    </location>
</feature>
<feature type="transmembrane region" description="Helical; Name=16" evidence="2">
    <location>
        <begin position="1081"/>
        <end position="1103"/>
    </location>
</feature>
<feature type="transmembrane region" description="Helical; Name=17" evidence="2">
    <location>
        <begin position="1149"/>
        <end position="1169"/>
    </location>
</feature>
<feature type="transmembrane region" description="Helical; Name=18" evidence="2">
    <location>
        <begin position="1174"/>
        <end position="1194"/>
    </location>
</feature>
<feature type="domain" description="ABC transmembrane type-1 1" evidence="4">
    <location>
        <begin position="314"/>
        <end position="589"/>
    </location>
</feature>
<feature type="domain" description="ABC transporter 1" evidence="3">
    <location>
        <begin position="623"/>
        <end position="846"/>
    </location>
</feature>
<feature type="domain" description="ABC transmembrane type-1 2" evidence="4">
    <location>
        <begin position="945"/>
        <end position="1215"/>
    </location>
</feature>
<feature type="domain" description="ABC transporter 2" evidence="3">
    <location>
        <begin position="1262"/>
        <end position="1496"/>
    </location>
</feature>
<feature type="region of interest" description="Disordered" evidence="5">
    <location>
        <begin position="881"/>
        <end position="919"/>
    </location>
</feature>
<feature type="compositionally biased region" description="Polar residues" evidence="5">
    <location>
        <begin position="881"/>
        <end position="897"/>
    </location>
</feature>
<feature type="compositionally biased region" description="Basic and acidic residues" evidence="5">
    <location>
        <begin position="904"/>
        <end position="919"/>
    </location>
</feature>
<feature type="binding site" evidence="3">
    <location>
        <begin position="658"/>
        <end position="665"/>
    </location>
    <ligand>
        <name>ATP</name>
        <dbReference type="ChEBI" id="CHEBI:30616"/>
    </ligand>
</feature>
<feature type="binding site" evidence="3">
    <location>
        <begin position="1296"/>
        <end position="1303"/>
    </location>
    <ligand>
        <name>ATP</name>
        <dbReference type="ChEBI" id="CHEBI:30616"/>
    </ligand>
</feature>
<organism>
    <name type="scientific">Oryza sativa subsp. indica</name>
    <name type="common">Rice</name>
    <dbReference type="NCBI Taxonomy" id="39946"/>
    <lineage>
        <taxon>Eukaryota</taxon>
        <taxon>Viridiplantae</taxon>
        <taxon>Streptophyta</taxon>
        <taxon>Embryophyta</taxon>
        <taxon>Tracheophyta</taxon>
        <taxon>Spermatophyta</taxon>
        <taxon>Magnoliopsida</taxon>
        <taxon>Liliopsida</taxon>
        <taxon>Poales</taxon>
        <taxon>Poaceae</taxon>
        <taxon>BOP clade</taxon>
        <taxon>Oryzoideae</taxon>
        <taxon>Oryzeae</taxon>
        <taxon>Oryzinae</taxon>
        <taxon>Oryza</taxon>
        <taxon>Oryza sativa</taxon>
    </lineage>
</organism>
<gene>
    <name evidence="6" type="primary">ABCC13</name>
    <name evidence="6" type="synonym">LPA2</name>
    <name evidence="7" type="ORF">OsI_09965</name>
</gene>
<keyword id="KW-0067">ATP-binding</keyword>
<keyword id="KW-0472">Membrane</keyword>
<keyword id="KW-0547">Nucleotide-binding</keyword>
<keyword id="KW-1185">Reference proteome</keyword>
<keyword id="KW-0677">Repeat</keyword>
<keyword id="KW-1278">Translocase</keyword>
<keyword id="KW-0812">Transmembrane</keyword>
<keyword id="KW-1133">Transmembrane helix</keyword>
<keyword id="KW-0813">Transport</keyword>
<accession>A2XCD4</accession>
<comment type="function">
    <text evidence="1">ABC transporter that may affect phytic acid transport and compartmentalization. May function directly or indirectly in removing phytic acid from the cytosol or in vesicle trafficking. Required for phytic acid accumulation in developing seeds. Phytic acid is the primary storage form of phosphorus in cereal grains and other plant seeds.</text>
</comment>
<comment type="subcellular location">
    <subcellularLocation>
        <location evidence="2">Membrane</location>
        <topology evidence="2">Multi-pass membrane protein</topology>
    </subcellularLocation>
</comment>
<comment type="similarity">
    <text evidence="6">Belongs to the ABC transporter superfamily. ABCC family. Conjugate transporter (TC 3.A.1.208) subfamily.</text>
</comment>